<protein>
    <recommendedName>
        <fullName evidence="1">DNA ligase</fullName>
        <ecNumber evidence="1">6.5.1.2</ecNumber>
    </recommendedName>
    <alternativeName>
        <fullName evidence="1">Polydeoxyribonucleotide synthase [NAD(+)]</fullName>
    </alternativeName>
</protein>
<feature type="chain" id="PRO_0000380430" description="DNA ligase">
    <location>
        <begin position="1"/>
        <end position="656"/>
    </location>
</feature>
<feature type="domain" description="BRCT" evidence="1">
    <location>
        <begin position="577"/>
        <end position="656"/>
    </location>
</feature>
<feature type="active site" description="N6-AMP-lysine intermediate" evidence="1">
    <location>
        <position position="114"/>
    </location>
</feature>
<feature type="binding site" evidence="1">
    <location>
        <begin position="32"/>
        <end position="36"/>
    </location>
    <ligand>
        <name>NAD(+)</name>
        <dbReference type="ChEBI" id="CHEBI:57540"/>
    </ligand>
</feature>
<feature type="binding site" evidence="1">
    <location>
        <begin position="81"/>
        <end position="82"/>
    </location>
    <ligand>
        <name>NAD(+)</name>
        <dbReference type="ChEBI" id="CHEBI:57540"/>
    </ligand>
</feature>
<feature type="binding site" evidence="1">
    <location>
        <position position="112"/>
    </location>
    <ligand>
        <name>NAD(+)</name>
        <dbReference type="ChEBI" id="CHEBI:57540"/>
    </ligand>
</feature>
<feature type="binding site" evidence="1">
    <location>
        <position position="135"/>
    </location>
    <ligand>
        <name>NAD(+)</name>
        <dbReference type="ChEBI" id="CHEBI:57540"/>
    </ligand>
</feature>
<feature type="binding site" evidence="1">
    <location>
        <position position="169"/>
    </location>
    <ligand>
        <name>NAD(+)</name>
        <dbReference type="ChEBI" id="CHEBI:57540"/>
    </ligand>
</feature>
<feature type="binding site" evidence="1">
    <location>
        <position position="284"/>
    </location>
    <ligand>
        <name>NAD(+)</name>
        <dbReference type="ChEBI" id="CHEBI:57540"/>
    </ligand>
</feature>
<feature type="binding site" evidence="1">
    <location>
        <position position="308"/>
    </location>
    <ligand>
        <name>NAD(+)</name>
        <dbReference type="ChEBI" id="CHEBI:57540"/>
    </ligand>
</feature>
<feature type="binding site" evidence="1">
    <location>
        <position position="402"/>
    </location>
    <ligand>
        <name>Zn(2+)</name>
        <dbReference type="ChEBI" id="CHEBI:29105"/>
    </ligand>
</feature>
<feature type="binding site" evidence="1">
    <location>
        <position position="405"/>
    </location>
    <ligand>
        <name>Zn(2+)</name>
        <dbReference type="ChEBI" id="CHEBI:29105"/>
    </ligand>
</feature>
<feature type="binding site" evidence="1">
    <location>
        <position position="418"/>
    </location>
    <ligand>
        <name>Zn(2+)</name>
        <dbReference type="ChEBI" id="CHEBI:29105"/>
    </ligand>
</feature>
<feature type="binding site" evidence="1">
    <location>
        <position position="423"/>
    </location>
    <ligand>
        <name>Zn(2+)</name>
        <dbReference type="ChEBI" id="CHEBI:29105"/>
    </ligand>
</feature>
<organism>
    <name type="scientific">Nautilia profundicola (strain ATCC BAA-1463 / DSM 18972 / AmH)</name>
    <dbReference type="NCBI Taxonomy" id="598659"/>
    <lineage>
        <taxon>Bacteria</taxon>
        <taxon>Pseudomonadati</taxon>
        <taxon>Campylobacterota</taxon>
        <taxon>Epsilonproteobacteria</taxon>
        <taxon>Nautiliales</taxon>
        <taxon>Nautiliaceae</taxon>
        <taxon>Nautilia</taxon>
    </lineage>
</organism>
<evidence type="ECO:0000255" key="1">
    <source>
        <dbReference type="HAMAP-Rule" id="MF_01588"/>
    </source>
</evidence>
<reference key="1">
    <citation type="journal article" date="2009" name="PLoS Genet.">
        <title>Adaptations to submarine hydrothermal environments exemplified by the genome of Nautilia profundicola.</title>
        <authorList>
            <person name="Campbell B.J."/>
            <person name="Smith J.L."/>
            <person name="Hanson T.E."/>
            <person name="Klotz M.G."/>
            <person name="Stein L.Y."/>
            <person name="Lee C.K."/>
            <person name="Wu D."/>
            <person name="Robinson J.M."/>
            <person name="Khouri H.M."/>
            <person name="Eisen J.A."/>
            <person name="Cary S.C."/>
        </authorList>
    </citation>
    <scope>NUCLEOTIDE SEQUENCE [LARGE SCALE GENOMIC DNA]</scope>
    <source>
        <strain>ATCC BAA-1463 / DSM 18972 / AmH</strain>
    </source>
</reference>
<accession>B9L8R4</accession>
<comment type="function">
    <text evidence="1">DNA ligase that catalyzes the formation of phosphodiester linkages between 5'-phosphoryl and 3'-hydroxyl groups in double-stranded DNA using NAD as a coenzyme and as the energy source for the reaction. It is essential for DNA replication and repair of damaged DNA.</text>
</comment>
<comment type="catalytic activity">
    <reaction evidence="1">
        <text>NAD(+) + (deoxyribonucleotide)n-3'-hydroxyl + 5'-phospho-(deoxyribonucleotide)m = (deoxyribonucleotide)n+m + AMP + beta-nicotinamide D-nucleotide.</text>
        <dbReference type="EC" id="6.5.1.2"/>
    </reaction>
</comment>
<comment type="cofactor">
    <cofactor evidence="1">
        <name>Mg(2+)</name>
        <dbReference type="ChEBI" id="CHEBI:18420"/>
    </cofactor>
    <cofactor evidence="1">
        <name>Mn(2+)</name>
        <dbReference type="ChEBI" id="CHEBI:29035"/>
    </cofactor>
</comment>
<comment type="similarity">
    <text evidence="1">Belongs to the NAD-dependent DNA ligase family. LigA subfamily.</text>
</comment>
<name>DNLJ_NAUPA</name>
<dbReference type="EC" id="6.5.1.2" evidence="1"/>
<dbReference type="EMBL" id="CP001279">
    <property type="protein sequence ID" value="ACM93636.1"/>
    <property type="molecule type" value="Genomic_DNA"/>
</dbReference>
<dbReference type="RefSeq" id="WP_015902688.1">
    <property type="nucleotide sequence ID" value="NC_012115.1"/>
</dbReference>
<dbReference type="SMR" id="B9L8R4"/>
<dbReference type="STRING" id="598659.NAMH_0606"/>
<dbReference type="KEGG" id="nam:NAMH_0606"/>
<dbReference type="eggNOG" id="COG0272">
    <property type="taxonomic scope" value="Bacteria"/>
</dbReference>
<dbReference type="HOGENOM" id="CLU_007764_2_1_7"/>
<dbReference type="OrthoDB" id="9759736at2"/>
<dbReference type="Proteomes" id="UP000000448">
    <property type="component" value="Chromosome"/>
</dbReference>
<dbReference type="GO" id="GO:0005829">
    <property type="term" value="C:cytosol"/>
    <property type="evidence" value="ECO:0007669"/>
    <property type="project" value="TreeGrafter"/>
</dbReference>
<dbReference type="GO" id="GO:0003677">
    <property type="term" value="F:DNA binding"/>
    <property type="evidence" value="ECO:0007669"/>
    <property type="project" value="InterPro"/>
</dbReference>
<dbReference type="GO" id="GO:0003911">
    <property type="term" value="F:DNA ligase (NAD+) activity"/>
    <property type="evidence" value="ECO:0007669"/>
    <property type="project" value="UniProtKB-UniRule"/>
</dbReference>
<dbReference type="GO" id="GO:0046872">
    <property type="term" value="F:metal ion binding"/>
    <property type="evidence" value="ECO:0007669"/>
    <property type="project" value="UniProtKB-KW"/>
</dbReference>
<dbReference type="GO" id="GO:0006281">
    <property type="term" value="P:DNA repair"/>
    <property type="evidence" value="ECO:0007669"/>
    <property type="project" value="UniProtKB-KW"/>
</dbReference>
<dbReference type="GO" id="GO:0006260">
    <property type="term" value="P:DNA replication"/>
    <property type="evidence" value="ECO:0007669"/>
    <property type="project" value="UniProtKB-KW"/>
</dbReference>
<dbReference type="CDD" id="cd17748">
    <property type="entry name" value="BRCT_DNA_ligase_like"/>
    <property type="match status" value="1"/>
</dbReference>
<dbReference type="CDD" id="cd00114">
    <property type="entry name" value="LIGANc"/>
    <property type="match status" value="1"/>
</dbReference>
<dbReference type="FunFam" id="1.10.150.20:FF:000007">
    <property type="entry name" value="DNA ligase"/>
    <property type="match status" value="1"/>
</dbReference>
<dbReference type="FunFam" id="2.40.50.140:FF:000012">
    <property type="entry name" value="DNA ligase"/>
    <property type="match status" value="1"/>
</dbReference>
<dbReference type="Gene3D" id="6.20.10.30">
    <property type="match status" value="1"/>
</dbReference>
<dbReference type="Gene3D" id="1.10.150.20">
    <property type="entry name" value="5' to 3' exonuclease, C-terminal subdomain"/>
    <property type="match status" value="2"/>
</dbReference>
<dbReference type="Gene3D" id="3.40.50.10190">
    <property type="entry name" value="BRCT domain"/>
    <property type="match status" value="1"/>
</dbReference>
<dbReference type="Gene3D" id="3.30.470.30">
    <property type="entry name" value="DNA ligase/mRNA capping enzyme"/>
    <property type="match status" value="1"/>
</dbReference>
<dbReference type="Gene3D" id="1.10.287.610">
    <property type="entry name" value="Helix hairpin bin"/>
    <property type="match status" value="1"/>
</dbReference>
<dbReference type="Gene3D" id="2.40.50.140">
    <property type="entry name" value="Nucleic acid-binding proteins"/>
    <property type="match status" value="1"/>
</dbReference>
<dbReference type="HAMAP" id="MF_01588">
    <property type="entry name" value="DNA_ligase_A"/>
    <property type="match status" value="1"/>
</dbReference>
<dbReference type="InterPro" id="IPR001357">
    <property type="entry name" value="BRCT_dom"/>
</dbReference>
<dbReference type="InterPro" id="IPR036420">
    <property type="entry name" value="BRCT_dom_sf"/>
</dbReference>
<dbReference type="InterPro" id="IPR001679">
    <property type="entry name" value="DNA_ligase"/>
</dbReference>
<dbReference type="InterPro" id="IPR018239">
    <property type="entry name" value="DNA_ligase_AS"/>
</dbReference>
<dbReference type="InterPro" id="IPR033136">
    <property type="entry name" value="DNA_ligase_CS"/>
</dbReference>
<dbReference type="InterPro" id="IPR013839">
    <property type="entry name" value="DNAligase_adenylation"/>
</dbReference>
<dbReference type="InterPro" id="IPR013840">
    <property type="entry name" value="DNAligase_N"/>
</dbReference>
<dbReference type="InterPro" id="IPR003583">
    <property type="entry name" value="Hlx-hairpin-Hlx_DNA-bd_motif"/>
</dbReference>
<dbReference type="InterPro" id="IPR012340">
    <property type="entry name" value="NA-bd_OB-fold"/>
</dbReference>
<dbReference type="InterPro" id="IPR004150">
    <property type="entry name" value="NAD_DNA_ligase_OB"/>
</dbReference>
<dbReference type="InterPro" id="IPR010994">
    <property type="entry name" value="RuvA_2-like"/>
</dbReference>
<dbReference type="InterPro" id="IPR004149">
    <property type="entry name" value="Znf_DNAligase_C4"/>
</dbReference>
<dbReference type="NCBIfam" id="TIGR00575">
    <property type="entry name" value="dnlj"/>
    <property type="match status" value="1"/>
</dbReference>
<dbReference type="NCBIfam" id="NF005932">
    <property type="entry name" value="PRK07956.1"/>
    <property type="match status" value="1"/>
</dbReference>
<dbReference type="PANTHER" id="PTHR23389">
    <property type="entry name" value="CHROMOSOME TRANSMISSION FIDELITY FACTOR 18"/>
    <property type="match status" value="1"/>
</dbReference>
<dbReference type="PANTHER" id="PTHR23389:SF9">
    <property type="entry name" value="DNA LIGASE"/>
    <property type="match status" value="1"/>
</dbReference>
<dbReference type="Pfam" id="PF00533">
    <property type="entry name" value="BRCT"/>
    <property type="match status" value="1"/>
</dbReference>
<dbReference type="Pfam" id="PF01653">
    <property type="entry name" value="DNA_ligase_aden"/>
    <property type="match status" value="1"/>
</dbReference>
<dbReference type="Pfam" id="PF03120">
    <property type="entry name" value="DNA_ligase_OB"/>
    <property type="match status" value="1"/>
</dbReference>
<dbReference type="Pfam" id="PF03119">
    <property type="entry name" value="DNA_ligase_ZBD"/>
    <property type="match status" value="1"/>
</dbReference>
<dbReference type="Pfam" id="PF14520">
    <property type="entry name" value="HHH_5"/>
    <property type="match status" value="1"/>
</dbReference>
<dbReference type="PIRSF" id="PIRSF001604">
    <property type="entry name" value="LigA"/>
    <property type="match status" value="1"/>
</dbReference>
<dbReference type="SMART" id="SM00292">
    <property type="entry name" value="BRCT"/>
    <property type="match status" value="1"/>
</dbReference>
<dbReference type="SMART" id="SM00278">
    <property type="entry name" value="HhH1"/>
    <property type="match status" value="3"/>
</dbReference>
<dbReference type="SMART" id="SM00532">
    <property type="entry name" value="LIGANc"/>
    <property type="match status" value="1"/>
</dbReference>
<dbReference type="SUPFAM" id="SSF52113">
    <property type="entry name" value="BRCT domain"/>
    <property type="match status" value="1"/>
</dbReference>
<dbReference type="SUPFAM" id="SSF56091">
    <property type="entry name" value="DNA ligase/mRNA capping enzyme, catalytic domain"/>
    <property type="match status" value="1"/>
</dbReference>
<dbReference type="SUPFAM" id="SSF50249">
    <property type="entry name" value="Nucleic acid-binding proteins"/>
    <property type="match status" value="1"/>
</dbReference>
<dbReference type="SUPFAM" id="SSF47781">
    <property type="entry name" value="RuvA domain 2-like"/>
    <property type="match status" value="1"/>
</dbReference>
<dbReference type="PROSITE" id="PS50172">
    <property type="entry name" value="BRCT"/>
    <property type="match status" value="1"/>
</dbReference>
<dbReference type="PROSITE" id="PS01055">
    <property type="entry name" value="DNA_LIGASE_N1"/>
    <property type="match status" value="1"/>
</dbReference>
<dbReference type="PROSITE" id="PS01056">
    <property type="entry name" value="DNA_LIGASE_N2"/>
    <property type="match status" value="1"/>
</dbReference>
<proteinExistence type="inferred from homology"/>
<keyword id="KW-0227">DNA damage</keyword>
<keyword id="KW-0234">DNA repair</keyword>
<keyword id="KW-0235">DNA replication</keyword>
<keyword id="KW-0436">Ligase</keyword>
<keyword id="KW-0460">Magnesium</keyword>
<keyword id="KW-0464">Manganese</keyword>
<keyword id="KW-0479">Metal-binding</keyword>
<keyword id="KW-0520">NAD</keyword>
<keyword id="KW-0862">Zinc</keyword>
<gene>
    <name evidence="1" type="primary">ligA</name>
    <name type="ordered locus">NAMH_0606</name>
</gene>
<sequence length="656" mass="75066">MIKDYNDYKKAVDTLKKWAYYYYVLDNPLVTDEEYDKLYHEVEEYEKKHPDKIDPTSPTQRVGDVVLEGFEKAKHLSRMWSMEDVFNEKDFLDWVGRVKRILGHENFSFYIEPKFDGASLNLIYENGKLIRAETRGDGEIGEDVTLNAKTINSIPLEIKEKSLIEIRGEVVIKKDDFDKLNEERLKNGEPTFANPRNAAAGSLRQLDPKITAKRPLIFYPWGVGVNSLNYERYSELMDYIYSLGFKEPPKRGVCKDIPCVEKKYDEFVKLRDSFEVMLDGMVVKIDEIKYHDILGYTQKYPRWMVAYKFPAIEKETIIEDVIVQVGRTGVLTPVAVLKPVEIGGVIVERATLHNFDEIERMDIRIGDHVIVIRSGDVIPKITKVLTWKRKGDEKPIPRPTHCPVCGAEVLDEGALIKCQNLSCPARVVNTIIYFASKNCLDIEGLGESVAKLLYEHGLVKDVTDLFELKVEDLEKLPLFARKKAENLVNAIKSKVGVECWRFVNALGIEHIGEVASKKICEKFGVEFYKHAPEEFEEIEGFGPEMVKSIAEYIRVNKEKIEKLIEILKPKNPEKKEVQKTPFTGKTVVLTGTMSKPRSEIKKMLEDMGAKVSSSVSKKTDFVIYGEDAGSKYDKAKKLGVNLLSEDDMWKMLKEGK</sequence>